<gene>
    <name evidence="1" type="primary">rplW</name>
    <name type="ordered locus">RT0649</name>
</gene>
<evidence type="ECO:0000255" key="1">
    <source>
        <dbReference type="HAMAP-Rule" id="MF_01369"/>
    </source>
</evidence>
<evidence type="ECO:0000305" key="2"/>
<sequence>MSVYKYYDLIKKPIITEKTTSISEQNKYTFYVNKFAKKLTIKKAIEAIFKVKVKKVNILNIQGKKKRFKGIIGTQINQKKAIVTLEKDHNIDYAGGIK</sequence>
<dbReference type="EMBL" id="AE017197">
    <property type="protein sequence ID" value="AAU04112.1"/>
    <property type="molecule type" value="Genomic_DNA"/>
</dbReference>
<dbReference type="RefSeq" id="WP_011191089.1">
    <property type="nucleotide sequence ID" value="NC_006142.1"/>
</dbReference>
<dbReference type="SMR" id="Q68W80"/>
<dbReference type="KEGG" id="rty:RT0649"/>
<dbReference type="eggNOG" id="COG0089">
    <property type="taxonomic scope" value="Bacteria"/>
</dbReference>
<dbReference type="HOGENOM" id="CLU_037562_3_1_5"/>
<dbReference type="OrthoDB" id="9793353at2"/>
<dbReference type="Proteomes" id="UP000000604">
    <property type="component" value="Chromosome"/>
</dbReference>
<dbReference type="GO" id="GO:1990904">
    <property type="term" value="C:ribonucleoprotein complex"/>
    <property type="evidence" value="ECO:0007669"/>
    <property type="project" value="UniProtKB-KW"/>
</dbReference>
<dbReference type="GO" id="GO:0005840">
    <property type="term" value="C:ribosome"/>
    <property type="evidence" value="ECO:0007669"/>
    <property type="project" value="UniProtKB-KW"/>
</dbReference>
<dbReference type="GO" id="GO:0019843">
    <property type="term" value="F:rRNA binding"/>
    <property type="evidence" value="ECO:0007669"/>
    <property type="project" value="UniProtKB-UniRule"/>
</dbReference>
<dbReference type="GO" id="GO:0003735">
    <property type="term" value="F:structural constituent of ribosome"/>
    <property type="evidence" value="ECO:0007669"/>
    <property type="project" value="InterPro"/>
</dbReference>
<dbReference type="GO" id="GO:0006412">
    <property type="term" value="P:translation"/>
    <property type="evidence" value="ECO:0007669"/>
    <property type="project" value="UniProtKB-UniRule"/>
</dbReference>
<dbReference type="FunFam" id="3.30.70.330:FF:000001">
    <property type="entry name" value="50S ribosomal protein L23"/>
    <property type="match status" value="1"/>
</dbReference>
<dbReference type="Gene3D" id="3.30.70.330">
    <property type="match status" value="1"/>
</dbReference>
<dbReference type="HAMAP" id="MF_01369_B">
    <property type="entry name" value="Ribosomal_uL23_B"/>
    <property type="match status" value="1"/>
</dbReference>
<dbReference type="InterPro" id="IPR012677">
    <property type="entry name" value="Nucleotide-bd_a/b_plait_sf"/>
</dbReference>
<dbReference type="InterPro" id="IPR013025">
    <property type="entry name" value="Ribosomal_uL23-like"/>
</dbReference>
<dbReference type="InterPro" id="IPR012678">
    <property type="entry name" value="Ribosomal_uL23/eL15/eS24_sf"/>
</dbReference>
<dbReference type="NCBIfam" id="NF004363">
    <property type="entry name" value="PRK05738.2-4"/>
    <property type="match status" value="1"/>
</dbReference>
<dbReference type="PANTHER" id="PTHR11620">
    <property type="entry name" value="60S RIBOSOMAL PROTEIN L23A"/>
    <property type="match status" value="1"/>
</dbReference>
<dbReference type="Pfam" id="PF00276">
    <property type="entry name" value="Ribosomal_L23"/>
    <property type="match status" value="1"/>
</dbReference>
<dbReference type="SUPFAM" id="SSF54189">
    <property type="entry name" value="Ribosomal proteins S24e, L23 and L15e"/>
    <property type="match status" value="1"/>
</dbReference>
<reference key="1">
    <citation type="journal article" date="2004" name="J. Bacteriol.">
        <title>Complete genome sequence of Rickettsia typhi and comparison with sequences of other Rickettsiae.</title>
        <authorList>
            <person name="McLeod M.P."/>
            <person name="Qin X."/>
            <person name="Karpathy S.E."/>
            <person name="Gioia J."/>
            <person name="Highlander S.K."/>
            <person name="Fox G.E."/>
            <person name="McNeill T.Z."/>
            <person name="Jiang H."/>
            <person name="Muzny D."/>
            <person name="Jacob L.S."/>
            <person name="Hawes A.C."/>
            <person name="Sodergren E."/>
            <person name="Gill R."/>
            <person name="Hume J."/>
            <person name="Morgan M."/>
            <person name="Fan G."/>
            <person name="Amin A.G."/>
            <person name="Gibbs R.A."/>
            <person name="Hong C."/>
            <person name="Yu X.-J."/>
            <person name="Walker D.H."/>
            <person name="Weinstock G.M."/>
        </authorList>
    </citation>
    <scope>NUCLEOTIDE SEQUENCE [LARGE SCALE GENOMIC DNA]</scope>
    <source>
        <strain>ATCC VR-144 / Wilmington</strain>
    </source>
</reference>
<keyword id="KW-0687">Ribonucleoprotein</keyword>
<keyword id="KW-0689">Ribosomal protein</keyword>
<keyword id="KW-0694">RNA-binding</keyword>
<keyword id="KW-0699">rRNA-binding</keyword>
<accession>Q68W80</accession>
<protein>
    <recommendedName>
        <fullName evidence="1">Large ribosomal subunit protein uL23</fullName>
    </recommendedName>
    <alternativeName>
        <fullName evidence="2">50S ribosomal protein L23</fullName>
    </alternativeName>
</protein>
<comment type="function">
    <text evidence="1">One of the early assembly proteins it binds 23S rRNA. One of the proteins that surrounds the polypeptide exit tunnel on the outside of the ribosome. Forms the main docking site for trigger factor binding to the ribosome.</text>
</comment>
<comment type="subunit">
    <text evidence="1">Part of the 50S ribosomal subunit. Contacts protein L29, and trigger factor when it is bound to the ribosome.</text>
</comment>
<comment type="similarity">
    <text evidence="1">Belongs to the universal ribosomal protein uL23 family.</text>
</comment>
<organism>
    <name type="scientific">Rickettsia typhi (strain ATCC VR-144 / Wilmington)</name>
    <dbReference type="NCBI Taxonomy" id="257363"/>
    <lineage>
        <taxon>Bacteria</taxon>
        <taxon>Pseudomonadati</taxon>
        <taxon>Pseudomonadota</taxon>
        <taxon>Alphaproteobacteria</taxon>
        <taxon>Rickettsiales</taxon>
        <taxon>Rickettsiaceae</taxon>
        <taxon>Rickettsieae</taxon>
        <taxon>Rickettsia</taxon>
        <taxon>typhus group</taxon>
    </lineage>
</organism>
<name>RL23_RICTY</name>
<proteinExistence type="inferred from homology"/>
<feature type="chain" id="PRO_0000272831" description="Large ribosomal subunit protein uL23">
    <location>
        <begin position="1"/>
        <end position="98"/>
    </location>
</feature>